<protein>
    <recommendedName>
        <fullName evidence="1">ATP-dependent 6-phosphofructokinase</fullName>
        <shortName evidence="1">ATP-PFK</shortName>
        <shortName evidence="1">Phosphofructokinase</shortName>
        <ecNumber evidence="1">2.7.1.11</ecNumber>
    </recommendedName>
    <alternativeName>
        <fullName evidence="1">Phosphohexokinase</fullName>
    </alternativeName>
</protein>
<sequence>MKRIAILTSGGDAPGMNAATRAVVRKAIYEGLEVYGINYGFLGLVNGDIRKLELGSVGDLLHRGGTFLYSARYPEFATEEGQLKGIEQLKKHQIDGLVVIGGDGSYHGAEALTKRGFPTIGIPGTIDNDISGTDFTIGFDTALNTVLDALDKIRDTATSHERTFIIEVMGRDAGDIALWSGLAGGAEAIIVPEESFNMDDVVDRLNKGRERGKKHSIIVVAEGVMSGNEFAKQLAEYGDYHARVTVLGHVQRGGSPTAFDRVLASRLGARSVELLLENRGGLAVGIRENRIVENNIGEILKEKHTLDQKLFDLASILSI</sequence>
<reference key="1">
    <citation type="journal article" date="2001" name="Science">
        <title>Comparative genomics of Listeria species.</title>
        <authorList>
            <person name="Glaser P."/>
            <person name="Frangeul L."/>
            <person name="Buchrieser C."/>
            <person name="Rusniok C."/>
            <person name="Amend A."/>
            <person name="Baquero F."/>
            <person name="Berche P."/>
            <person name="Bloecker H."/>
            <person name="Brandt P."/>
            <person name="Chakraborty T."/>
            <person name="Charbit A."/>
            <person name="Chetouani F."/>
            <person name="Couve E."/>
            <person name="de Daruvar A."/>
            <person name="Dehoux P."/>
            <person name="Domann E."/>
            <person name="Dominguez-Bernal G."/>
            <person name="Duchaud E."/>
            <person name="Durant L."/>
            <person name="Dussurget O."/>
            <person name="Entian K.-D."/>
            <person name="Fsihi H."/>
            <person name="Garcia-del Portillo F."/>
            <person name="Garrido P."/>
            <person name="Gautier L."/>
            <person name="Goebel W."/>
            <person name="Gomez-Lopez N."/>
            <person name="Hain T."/>
            <person name="Hauf J."/>
            <person name="Jackson D."/>
            <person name="Jones L.-M."/>
            <person name="Kaerst U."/>
            <person name="Kreft J."/>
            <person name="Kuhn M."/>
            <person name="Kunst F."/>
            <person name="Kurapkat G."/>
            <person name="Madueno E."/>
            <person name="Maitournam A."/>
            <person name="Mata Vicente J."/>
            <person name="Ng E."/>
            <person name="Nedjari H."/>
            <person name="Nordsiek G."/>
            <person name="Novella S."/>
            <person name="de Pablos B."/>
            <person name="Perez-Diaz J.-C."/>
            <person name="Purcell R."/>
            <person name="Remmel B."/>
            <person name="Rose M."/>
            <person name="Schlueter T."/>
            <person name="Simoes N."/>
            <person name="Tierrez A."/>
            <person name="Vazquez-Boland J.-A."/>
            <person name="Voss H."/>
            <person name="Wehland J."/>
            <person name="Cossart P."/>
        </authorList>
    </citation>
    <scope>NUCLEOTIDE SEQUENCE [LARGE SCALE GENOMIC DNA]</scope>
    <source>
        <strain>ATCC BAA-680 / CLIP 11262</strain>
    </source>
</reference>
<dbReference type="EC" id="2.7.1.11" evidence="1"/>
<dbReference type="EMBL" id="AL596169">
    <property type="protein sequence ID" value="CAC96837.1"/>
    <property type="molecule type" value="Genomic_DNA"/>
</dbReference>
<dbReference type="PIR" id="AE1633">
    <property type="entry name" value="AE1633"/>
</dbReference>
<dbReference type="RefSeq" id="WP_003762450.1">
    <property type="nucleotide sequence ID" value="NC_003212.1"/>
</dbReference>
<dbReference type="SMR" id="Q92BE4"/>
<dbReference type="STRING" id="272626.gene:17565937"/>
<dbReference type="GeneID" id="93234988"/>
<dbReference type="KEGG" id="lin:lin1606"/>
<dbReference type="eggNOG" id="COG0205">
    <property type="taxonomic scope" value="Bacteria"/>
</dbReference>
<dbReference type="HOGENOM" id="CLU_020655_0_1_9"/>
<dbReference type="OrthoDB" id="9802503at2"/>
<dbReference type="UniPathway" id="UPA00109">
    <property type="reaction ID" value="UER00182"/>
</dbReference>
<dbReference type="Proteomes" id="UP000002513">
    <property type="component" value="Chromosome"/>
</dbReference>
<dbReference type="GO" id="GO:0005945">
    <property type="term" value="C:6-phosphofructokinase complex"/>
    <property type="evidence" value="ECO:0007669"/>
    <property type="project" value="TreeGrafter"/>
</dbReference>
<dbReference type="GO" id="GO:0003872">
    <property type="term" value="F:6-phosphofructokinase activity"/>
    <property type="evidence" value="ECO:0007669"/>
    <property type="project" value="UniProtKB-UniRule"/>
</dbReference>
<dbReference type="GO" id="GO:0016208">
    <property type="term" value="F:AMP binding"/>
    <property type="evidence" value="ECO:0007669"/>
    <property type="project" value="TreeGrafter"/>
</dbReference>
<dbReference type="GO" id="GO:0005524">
    <property type="term" value="F:ATP binding"/>
    <property type="evidence" value="ECO:0007669"/>
    <property type="project" value="UniProtKB-KW"/>
</dbReference>
<dbReference type="GO" id="GO:0070095">
    <property type="term" value="F:fructose-6-phosphate binding"/>
    <property type="evidence" value="ECO:0007669"/>
    <property type="project" value="TreeGrafter"/>
</dbReference>
<dbReference type="GO" id="GO:0042802">
    <property type="term" value="F:identical protein binding"/>
    <property type="evidence" value="ECO:0007669"/>
    <property type="project" value="TreeGrafter"/>
</dbReference>
<dbReference type="GO" id="GO:0046872">
    <property type="term" value="F:metal ion binding"/>
    <property type="evidence" value="ECO:0007669"/>
    <property type="project" value="UniProtKB-KW"/>
</dbReference>
<dbReference type="GO" id="GO:0048029">
    <property type="term" value="F:monosaccharide binding"/>
    <property type="evidence" value="ECO:0007669"/>
    <property type="project" value="TreeGrafter"/>
</dbReference>
<dbReference type="GO" id="GO:0061621">
    <property type="term" value="P:canonical glycolysis"/>
    <property type="evidence" value="ECO:0007669"/>
    <property type="project" value="TreeGrafter"/>
</dbReference>
<dbReference type="GO" id="GO:0030388">
    <property type="term" value="P:fructose 1,6-bisphosphate metabolic process"/>
    <property type="evidence" value="ECO:0007669"/>
    <property type="project" value="TreeGrafter"/>
</dbReference>
<dbReference type="GO" id="GO:0006002">
    <property type="term" value="P:fructose 6-phosphate metabolic process"/>
    <property type="evidence" value="ECO:0007669"/>
    <property type="project" value="InterPro"/>
</dbReference>
<dbReference type="CDD" id="cd00763">
    <property type="entry name" value="Bacterial_PFK"/>
    <property type="match status" value="1"/>
</dbReference>
<dbReference type="FunFam" id="3.40.50.450:FF:000001">
    <property type="entry name" value="ATP-dependent 6-phosphofructokinase"/>
    <property type="match status" value="1"/>
</dbReference>
<dbReference type="FunFam" id="3.40.50.460:FF:000002">
    <property type="entry name" value="ATP-dependent 6-phosphofructokinase"/>
    <property type="match status" value="1"/>
</dbReference>
<dbReference type="Gene3D" id="3.40.50.450">
    <property type="match status" value="1"/>
</dbReference>
<dbReference type="Gene3D" id="3.40.50.460">
    <property type="entry name" value="Phosphofructokinase domain"/>
    <property type="match status" value="1"/>
</dbReference>
<dbReference type="HAMAP" id="MF_00339">
    <property type="entry name" value="Phosphofructokinase_I_B1"/>
    <property type="match status" value="1"/>
</dbReference>
<dbReference type="InterPro" id="IPR022953">
    <property type="entry name" value="ATP_PFK"/>
</dbReference>
<dbReference type="InterPro" id="IPR012003">
    <property type="entry name" value="ATP_PFK_prok-type"/>
</dbReference>
<dbReference type="InterPro" id="IPR012828">
    <property type="entry name" value="PFKA_ATP_prok"/>
</dbReference>
<dbReference type="InterPro" id="IPR015912">
    <property type="entry name" value="Phosphofructokinase_CS"/>
</dbReference>
<dbReference type="InterPro" id="IPR000023">
    <property type="entry name" value="Phosphofructokinase_dom"/>
</dbReference>
<dbReference type="InterPro" id="IPR035966">
    <property type="entry name" value="PKF_sf"/>
</dbReference>
<dbReference type="NCBIfam" id="TIGR02482">
    <property type="entry name" value="PFKA_ATP"/>
    <property type="match status" value="1"/>
</dbReference>
<dbReference type="NCBIfam" id="NF002872">
    <property type="entry name" value="PRK03202.1"/>
    <property type="match status" value="1"/>
</dbReference>
<dbReference type="PANTHER" id="PTHR13697:SF4">
    <property type="entry name" value="ATP-DEPENDENT 6-PHOSPHOFRUCTOKINASE"/>
    <property type="match status" value="1"/>
</dbReference>
<dbReference type="PANTHER" id="PTHR13697">
    <property type="entry name" value="PHOSPHOFRUCTOKINASE"/>
    <property type="match status" value="1"/>
</dbReference>
<dbReference type="Pfam" id="PF00365">
    <property type="entry name" value="PFK"/>
    <property type="match status" value="1"/>
</dbReference>
<dbReference type="PIRSF" id="PIRSF000532">
    <property type="entry name" value="ATP_PFK_prok"/>
    <property type="match status" value="1"/>
</dbReference>
<dbReference type="PRINTS" id="PR00476">
    <property type="entry name" value="PHFRCTKINASE"/>
</dbReference>
<dbReference type="SUPFAM" id="SSF53784">
    <property type="entry name" value="Phosphofructokinase"/>
    <property type="match status" value="1"/>
</dbReference>
<dbReference type="PROSITE" id="PS00433">
    <property type="entry name" value="PHOSPHOFRUCTOKINASE"/>
    <property type="match status" value="1"/>
</dbReference>
<comment type="function">
    <text evidence="1">Catalyzes the phosphorylation of D-fructose 6-phosphate to fructose 1,6-bisphosphate by ATP, the first committing step of glycolysis.</text>
</comment>
<comment type="catalytic activity">
    <reaction evidence="1">
        <text>beta-D-fructose 6-phosphate + ATP = beta-D-fructose 1,6-bisphosphate + ADP + H(+)</text>
        <dbReference type="Rhea" id="RHEA:16109"/>
        <dbReference type="ChEBI" id="CHEBI:15378"/>
        <dbReference type="ChEBI" id="CHEBI:30616"/>
        <dbReference type="ChEBI" id="CHEBI:32966"/>
        <dbReference type="ChEBI" id="CHEBI:57634"/>
        <dbReference type="ChEBI" id="CHEBI:456216"/>
        <dbReference type="EC" id="2.7.1.11"/>
    </reaction>
</comment>
<comment type="cofactor">
    <cofactor evidence="1">
        <name>Mg(2+)</name>
        <dbReference type="ChEBI" id="CHEBI:18420"/>
    </cofactor>
</comment>
<comment type="activity regulation">
    <text evidence="1">Allosterically activated by ADP and other diphosphonucleosides, and allosterically inhibited by phosphoenolpyruvate.</text>
</comment>
<comment type="pathway">
    <text evidence="1">Carbohydrate degradation; glycolysis; D-glyceraldehyde 3-phosphate and glycerone phosphate from D-glucose: step 3/4.</text>
</comment>
<comment type="subunit">
    <text evidence="1">Homotetramer.</text>
</comment>
<comment type="subcellular location">
    <subcellularLocation>
        <location evidence="1">Cytoplasm</location>
    </subcellularLocation>
</comment>
<comment type="similarity">
    <text evidence="1">Belongs to the phosphofructokinase type A (PFKA) family. ATP-dependent PFK group I subfamily. Prokaryotic clade 'B1' sub-subfamily.</text>
</comment>
<feature type="chain" id="PRO_0000111960" description="ATP-dependent 6-phosphofructokinase">
    <location>
        <begin position="1"/>
        <end position="319"/>
    </location>
</feature>
<feature type="active site" description="Proton acceptor" evidence="1">
    <location>
        <position position="127"/>
    </location>
</feature>
<feature type="binding site" evidence="1">
    <location>
        <position position="11"/>
    </location>
    <ligand>
        <name>ATP</name>
        <dbReference type="ChEBI" id="CHEBI:30616"/>
    </ligand>
</feature>
<feature type="binding site" evidence="1">
    <location>
        <begin position="21"/>
        <end position="25"/>
    </location>
    <ligand>
        <name>ADP</name>
        <dbReference type="ChEBI" id="CHEBI:456216"/>
        <note>allosteric activator; ligand shared between dimeric partners</note>
    </ligand>
</feature>
<feature type="binding site" evidence="1">
    <location>
        <begin position="72"/>
        <end position="73"/>
    </location>
    <ligand>
        <name>ATP</name>
        <dbReference type="ChEBI" id="CHEBI:30616"/>
    </ligand>
</feature>
<feature type="binding site" evidence="1">
    <location>
        <begin position="102"/>
        <end position="105"/>
    </location>
    <ligand>
        <name>ATP</name>
        <dbReference type="ChEBI" id="CHEBI:30616"/>
    </ligand>
</feature>
<feature type="binding site" evidence="1">
    <location>
        <position position="103"/>
    </location>
    <ligand>
        <name>Mg(2+)</name>
        <dbReference type="ChEBI" id="CHEBI:18420"/>
        <note>catalytic</note>
    </ligand>
</feature>
<feature type="binding site" description="in other chain" evidence="1">
    <location>
        <begin position="125"/>
        <end position="127"/>
    </location>
    <ligand>
        <name>substrate</name>
        <note>ligand shared between dimeric partners</note>
    </ligand>
</feature>
<feature type="binding site" description="in other chain" evidence="1">
    <location>
        <position position="154"/>
    </location>
    <ligand>
        <name>ADP</name>
        <dbReference type="ChEBI" id="CHEBI:456216"/>
        <note>allosteric activator; ligand shared between dimeric partners</note>
    </ligand>
</feature>
<feature type="binding site" evidence="1">
    <location>
        <position position="162"/>
    </location>
    <ligand>
        <name>substrate</name>
        <note>ligand shared between dimeric partners</note>
    </ligand>
</feature>
<feature type="binding site" description="in other chain" evidence="1">
    <location>
        <begin position="169"/>
        <end position="171"/>
    </location>
    <ligand>
        <name>substrate</name>
        <note>ligand shared between dimeric partners</note>
    </ligand>
</feature>
<feature type="binding site" description="in other chain" evidence="1">
    <location>
        <begin position="185"/>
        <end position="187"/>
    </location>
    <ligand>
        <name>ADP</name>
        <dbReference type="ChEBI" id="CHEBI:456216"/>
        <note>allosteric activator; ligand shared between dimeric partners</note>
    </ligand>
</feature>
<feature type="binding site" description="in other chain" evidence="1">
    <location>
        <position position="211"/>
    </location>
    <ligand>
        <name>ADP</name>
        <dbReference type="ChEBI" id="CHEBI:456216"/>
        <note>allosteric activator; ligand shared between dimeric partners</note>
    </ligand>
</feature>
<feature type="binding site" description="in other chain" evidence="1">
    <location>
        <begin position="213"/>
        <end position="215"/>
    </location>
    <ligand>
        <name>ADP</name>
        <dbReference type="ChEBI" id="CHEBI:456216"/>
        <note>allosteric activator; ligand shared between dimeric partners</note>
    </ligand>
</feature>
<feature type="binding site" description="in other chain" evidence="1">
    <location>
        <position position="222"/>
    </location>
    <ligand>
        <name>substrate</name>
        <note>ligand shared between dimeric partners</note>
    </ligand>
</feature>
<feature type="binding site" evidence="1">
    <location>
        <position position="243"/>
    </location>
    <ligand>
        <name>substrate</name>
        <note>ligand shared between dimeric partners</note>
    </ligand>
</feature>
<feature type="binding site" description="in other chain" evidence="1">
    <location>
        <begin position="249"/>
        <end position="252"/>
    </location>
    <ligand>
        <name>substrate</name>
        <note>ligand shared between dimeric partners</note>
    </ligand>
</feature>
<proteinExistence type="inferred from homology"/>
<keyword id="KW-0021">Allosteric enzyme</keyword>
<keyword id="KW-0067">ATP-binding</keyword>
<keyword id="KW-0963">Cytoplasm</keyword>
<keyword id="KW-0324">Glycolysis</keyword>
<keyword id="KW-0418">Kinase</keyword>
<keyword id="KW-0460">Magnesium</keyword>
<keyword id="KW-0479">Metal-binding</keyword>
<keyword id="KW-0547">Nucleotide-binding</keyword>
<keyword id="KW-0808">Transferase</keyword>
<accession>Q92BE4</accession>
<name>PFKA_LISIN</name>
<organism>
    <name type="scientific">Listeria innocua serovar 6a (strain ATCC BAA-680 / CLIP 11262)</name>
    <dbReference type="NCBI Taxonomy" id="272626"/>
    <lineage>
        <taxon>Bacteria</taxon>
        <taxon>Bacillati</taxon>
        <taxon>Bacillota</taxon>
        <taxon>Bacilli</taxon>
        <taxon>Bacillales</taxon>
        <taxon>Listeriaceae</taxon>
        <taxon>Listeria</taxon>
    </lineage>
</organism>
<gene>
    <name evidence="1" type="primary">pfkA</name>
    <name type="ordered locus">lin1606</name>
</gene>
<evidence type="ECO:0000255" key="1">
    <source>
        <dbReference type="HAMAP-Rule" id="MF_00339"/>
    </source>
</evidence>